<feature type="chain" id="PRO_0000232251" description="ATP-dependent RNA helicase dbp7">
    <location>
        <begin position="1"/>
        <end position="760"/>
    </location>
</feature>
<feature type="domain" description="Helicase ATP-binding" evidence="2">
    <location>
        <begin position="170"/>
        <end position="372"/>
    </location>
</feature>
<feature type="domain" description="Helicase C-terminal" evidence="3">
    <location>
        <begin position="396"/>
        <end position="609"/>
    </location>
</feature>
<feature type="region of interest" description="Disordered" evidence="4">
    <location>
        <begin position="23"/>
        <end position="129"/>
    </location>
</feature>
<feature type="region of interest" description="Disordered" evidence="4">
    <location>
        <begin position="453"/>
        <end position="490"/>
    </location>
</feature>
<feature type="region of interest" description="Disordered" evidence="4">
    <location>
        <begin position="692"/>
        <end position="760"/>
    </location>
</feature>
<feature type="short sequence motif" description="Q motif">
    <location>
        <begin position="137"/>
        <end position="166"/>
    </location>
</feature>
<feature type="short sequence motif" description="DEAD box">
    <location>
        <begin position="308"/>
        <end position="311"/>
    </location>
</feature>
<feature type="compositionally biased region" description="Basic and acidic residues" evidence="4">
    <location>
        <begin position="23"/>
        <end position="34"/>
    </location>
</feature>
<feature type="compositionally biased region" description="Basic residues" evidence="4">
    <location>
        <begin position="38"/>
        <end position="47"/>
    </location>
</feature>
<feature type="compositionally biased region" description="Polar residues" evidence="4">
    <location>
        <begin position="58"/>
        <end position="72"/>
    </location>
</feature>
<feature type="compositionally biased region" description="Basic and acidic residues" evidence="4">
    <location>
        <begin position="77"/>
        <end position="94"/>
    </location>
</feature>
<feature type="compositionally biased region" description="Polar residues" evidence="4">
    <location>
        <begin position="99"/>
        <end position="110"/>
    </location>
</feature>
<feature type="compositionally biased region" description="Acidic residues" evidence="4">
    <location>
        <begin position="456"/>
        <end position="470"/>
    </location>
</feature>
<feature type="compositionally biased region" description="Basic and acidic residues" evidence="4">
    <location>
        <begin position="701"/>
        <end position="716"/>
    </location>
</feature>
<feature type="compositionally biased region" description="Polar residues" evidence="4">
    <location>
        <begin position="731"/>
        <end position="740"/>
    </location>
</feature>
<feature type="binding site" evidence="2">
    <location>
        <begin position="183"/>
        <end position="190"/>
    </location>
    <ligand>
        <name>ATP</name>
        <dbReference type="ChEBI" id="CHEBI:30616"/>
    </ligand>
</feature>
<organism>
    <name type="scientific">Aspergillus oryzae (strain ATCC 42149 / RIB 40)</name>
    <name type="common">Yellow koji mold</name>
    <dbReference type="NCBI Taxonomy" id="510516"/>
    <lineage>
        <taxon>Eukaryota</taxon>
        <taxon>Fungi</taxon>
        <taxon>Dikarya</taxon>
        <taxon>Ascomycota</taxon>
        <taxon>Pezizomycotina</taxon>
        <taxon>Eurotiomycetes</taxon>
        <taxon>Eurotiomycetidae</taxon>
        <taxon>Eurotiales</taxon>
        <taxon>Aspergillaceae</taxon>
        <taxon>Aspergillus</taxon>
        <taxon>Aspergillus subgen. Circumdati</taxon>
    </lineage>
</organism>
<proteinExistence type="inferred from homology"/>
<name>DBP7_ASPOR</name>
<protein>
    <recommendedName>
        <fullName>ATP-dependent RNA helicase dbp7</fullName>
        <ecNumber>3.6.4.13</ecNumber>
    </recommendedName>
</protein>
<accession>Q2UE66</accession>
<dbReference type="EC" id="3.6.4.13"/>
<dbReference type="EMBL" id="BA000051">
    <property type="protein sequence ID" value="BAE60149.1"/>
    <property type="molecule type" value="Genomic_DNA"/>
</dbReference>
<dbReference type="RefSeq" id="XP_001822151.1">
    <property type="nucleotide sequence ID" value="XM_001822099.1"/>
</dbReference>
<dbReference type="SMR" id="Q2UE66"/>
<dbReference type="STRING" id="510516.Q2UE66"/>
<dbReference type="EnsemblFungi" id="BAE60149">
    <property type="protein sequence ID" value="BAE60149"/>
    <property type="gene ID" value="AO090026000744"/>
</dbReference>
<dbReference type="GeneID" id="5994179"/>
<dbReference type="KEGG" id="aor:AO090026000744"/>
<dbReference type="VEuPathDB" id="FungiDB:AO090026000744"/>
<dbReference type="HOGENOM" id="CLU_003041_26_2_1"/>
<dbReference type="OMA" id="AVHIKAD"/>
<dbReference type="OrthoDB" id="91544at5052"/>
<dbReference type="Proteomes" id="UP000006564">
    <property type="component" value="Chromosome 3"/>
</dbReference>
<dbReference type="GO" id="GO:0005730">
    <property type="term" value="C:nucleolus"/>
    <property type="evidence" value="ECO:0007669"/>
    <property type="project" value="UniProtKB-SubCell"/>
</dbReference>
<dbReference type="GO" id="GO:0005524">
    <property type="term" value="F:ATP binding"/>
    <property type="evidence" value="ECO:0007669"/>
    <property type="project" value="UniProtKB-KW"/>
</dbReference>
<dbReference type="GO" id="GO:0016887">
    <property type="term" value="F:ATP hydrolysis activity"/>
    <property type="evidence" value="ECO:0007669"/>
    <property type="project" value="RHEA"/>
</dbReference>
<dbReference type="GO" id="GO:0003723">
    <property type="term" value="F:RNA binding"/>
    <property type="evidence" value="ECO:0007669"/>
    <property type="project" value="UniProtKB-KW"/>
</dbReference>
<dbReference type="GO" id="GO:0003724">
    <property type="term" value="F:RNA helicase activity"/>
    <property type="evidence" value="ECO:0007669"/>
    <property type="project" value="UniProtKB-EC"/>
</dbReference>
<dbReference type="GO" id="GO:0000464">
    <property type="term" value="P:endonucleolytic cleavage in ITS1 upstream of 5.8S rRNA from tricistronic rRNA transcript (SSU-rRNA, 5.8S rRNA, LSU-rRNA)"/>
    <property type="evidence" value="ECO:0007669"/>
    <property type="project" value="EnsemblFungi"/>
</dbReference>
<dbReference type="CDD" id="cd17949">
    <property type="entry name" value="DEADc_DDX31"/>
    <property type="match status" value="1"/>
</dbReference>
<dbReference type="CDD" id="cd18787">
    <property type="entry name" value="SF2_C_DEAD"/>
    <property type="match status" value="1"/>
</dbReference>
<dbReference type="Gene3D" id="3.40.50.300">
    <property type="entry name" value="P-loop containing nucleotide triphosphate hydrolases"/>
    <property type="match status" value="2"/>
</dbReference>
<dbReference type="InterPro" id="IPR011545">
    <property type="entry name" value="DEAD/DEAH_box_helicase_dom"/>
</dbReference>
<dbReference type="InterPro" id="IPR014001">
    <property type="entry name" value="Helicase_ATP-bd"/>
</dbReference>
<dbReference type="InterPro" id="IPR001650">
    <property type="entry name" value="Helicase_C-like"/>
</dbReference>
<dbReference type="InterPro" id="IPR027417">
    <property type="entry name" value="P-loop_NTPase"/>
</dbReference>
<dbReference type="InterPro" id="IPR025313">
    <property type="entry name" value="SPB4-like_CTE"/>
</dbReference>
<dbReference type="PANTHER" id="PTHR24031">
    <property type="entry name" value="RNA HELICASE"/>
    <property type="match status" value="1"/>
</dbReference>
<dbReference type="Pfam" id="PF13959">
    <property type="entry name" value="CTE_SPB4"/>
    <property type="match status" value="1"/>
</dbReference>
<dbReference type="Pfam" id="PF00270">
    <property type="entry name" value="DEAD"/>
    <property type="match status" value="1"/>
</dbReference>
<dbReference type="Pfam" id="PF00271">
    <property type="entry name" value="Helicase_C"/>
    <property type="match status" value="1"/>
</dbReference>
<dbReference type="SMART" id="SM00487">
    <property type="entry name" value="DEXDc"/>
    <property type="match status" value="1"/>
</dbReference>
<dbReference type="SMART" id="SM01178">
    <property type="entry name" value="DUF4217"/>
    <property type="match status" value="1"/>
</dbReference>
<dbReference type="SMART" id="SM00490">
    <property type="entry name" value="HELICc"/>
    <property type="match status" value="1"/>
</dbReference>
<dbReference type="SUPFAM" id="SSF52540">
    <property type="entry name" value="P-loop containing nucleoside triphosphate hydrolases"/>
    <property type="match status" value="1"/>
</dbReference>
<dbReference type="PROSITE" id="PS51192">
    <property type="entry name" value="HELICASE_ATP_BIND_1"/>
    <property type="match status" value="1"/>
</dbReference>
<dbReference type="PROSITE" id="PS51194">
    <property type="entry name" value="HELICASE_CTER"/>
    <property type="match status" value="1"/>
</dbReference>
<dbReference type="PROSITE" id="PS51195">
    <property type="entry name" value="Q_MOTIF"/>
    <property type="match status" value="1"/>
</dbReference>
<reference key="1">
    <citation type="journal article" date="2005" name="Nature">
        <title>Genome sequencing and analysis of Aspergillus oryzae.</title>
        <authorList>
            <person name="Machida M."/>
            <person name="Asai K."/>
            <person name="Sano M."/>
            <person name="Tanaka T."/>
            <person name="Kumagai T."/>
            <person name="Terai G."/>
            <person name="Kusumoto K."/>
            <person name="Arima T."/>
            <person name="Akita O."/>
            <person name="Kashiwagi Y."/>
            <person name="Abe K."/>
            <person name="Gomi K."/>
            <person name="Horiuchi H."/>
            <person name="Kitamoto K."/>
            <person name="Kobayashi T."/>
            <person name="Takeuchi M."/>
            <person name="Denning D.W."/>
            <person name="Galagan J.E."/>
            <person name="Nierman W.C."/>
            <person name="Yu J."/>
            <person name="Archer D.B."/>
            <person name="Bennett J.W."/>
            <person name="Bhatnagar D."/>
            <person name="Cleveland T.E."/>
            <person name="Fedorova N.D."/>
            <person name="Gotoh O."/>
            <person name="Horikawa H."/>
            <person name="Hosoyama A."/>
            <person name="Ichinomiya M."/>
            <person name="Igarashi R."/>
            <person name="Iwashita K."/>
            <person name="Juvvadi P.R."/>
            <person name="Kato M."/>
            <person name="Kato Y."/>
            <person name="Kin T."/>
            <person name="Kokubun A."/>
            <person name="Maeda H."/>
            <person name="Maeyama N."/>
            <person name="Maruyama J."/>
            <person name="Nagasaki H."/>
            <person name="Nakajima T."/>
            <person name="Oda K."/>
            <person name="Okada K."/>
            <person name="Paulsen I."/>
            <person name="Sakamoto K."/>
            <person name="Sawano T."/>
            <person name="Takahashi M."/>
            <person name="Takase K."/>
            <person name="Terabayashi Y."/>
            <person name="Wortman J.R."/>
            <person name="Yamada O."/>
            <person name="Yamagata Y."/>
            <person name="Anazawa H."/>
            <person name="Hata Y."/>
            <person name="Koide Y."/>
            <person name="Komori T."/>
            <person name="Koyama Y."/>
            <person name="Minetoki T."/>
            <person name="Suharnan S."/>
            <person name="Tanaka A."/>
            <person name="Isono K."/>
            <person name="Kuhara S."/>
            <person name="Ogasawara N."/>
            <person name="Kikuchi H."/>
        </authorList>
    </citation>
    <scope>NUCLEOTIDE SEQUENCE [LARGE SCALE GENOMIC DNA]</scope>
    <source>
        <strain>ATCC 42149 / RIB 40</strain>
    </source>
</reference>
<evidence type="ECO:0000250" key="1"/>
<evidence type="ECO:0000255" key="2">
    <source>
        <dbReference type="PROSITE-ProRule" id="PRU00541"/>
    </source>
</evidence>
<evidence type="ECO:0000255" key="3">
    <source>
        <dbReference type="PROSITE-ProRule" id="PRU00542"/>
    </source>
</evidence>
<evidence type="ECO:0000256" key="4">
    <source>
        <dbReference type="SAM" id="MobiDB-lite"/>
    </source>
</evidence>
<evidence type="ECO:0000305" key="5"/>
<sequence>MADDGLLLNFSIGDTNIIKPETKLKGGTWRDRLSAKKIAQHRTKNPRKPGEERPSSGKGPQNPNRIQVSSSRPSKRQKTDADGDNEKSRHDNKQHPRQFVSSLFSKNPTPRNAEEEPEQEPVEDAKPTNAPLIDGLDTFTNLGLSPSLAAHLLTKLELKAPTGIQKASMSQLLKEDSDAFIQAETGSGKTLAYLLPLVQRIMTVSNPKNMSTNSKGEPIVHRDSGLFAIVLAPTRELCKQISVVLESLLRCAHWIVAGTVIGGEKKKSEKARLRKGLNILVATPGRLADHLENTQALDVSNVRWLVLDEGDRLMELGFEKELQGIIQKLDARQRPSRIPGIPTKRTTILCSATLKMNVQKLGEISLKDAVHIKADPADEDGETKRKDDDGFRVPAQLKQSYAIVAAKLRLVTLTAYLKRTFMRKGSVMKAIVFVSCADSVDFHFEVFSRRKQYRDESEDEDEEKEDDDEDNSKTKSEASPHGTIAPAVAFSNPSNPVKLHKLHGSLPQHVRTATLNAFSREREPSVLVCTDVASRGLDLPNVDLVIEYDPAFSADDHTHRIGRTARLGRDGRALIFLMPGCEENYVEILKQGYRDGGKALTRTTAEDILKRGFGGNITSETKNWEEKATDWQMDLERWAVDNPQYLEMARRAYQSHIRAYATHIASERSMFNIKELHLGHLAKSFALRDRPSKINVPGLRPGDKEAKKDYKAERNTVGKKRKAGGRDDDFQPSNDATSAAQKMRAKLKEHMAGASEFNLA</sequence>
<keyword id="KW-0067">ATP-binding</keyword>
<keyword id="KW-0347">Helicase</keyword>
<keyword id="KW-0378">Hydrolase</keyword>
<keyword id="KW-0547">Nucleotide-binding</keyword>
<keyword id="KW-0539">Nucleus</keyword>
<keyword id="KW-1185">Reference proteome</keyword>
<keyword id="KW-0690">Ribosome biogenesis</keyword>
<keyword id="KW-0694">RNA-binding</keyword>
<keyword id="KW-0698">rRNA processing</keyword>
<comment type="function">
    <text evidence="1">ATP-binding RNA helicase involved in the biogenesis of 60S ribosomal subunits and is required for the normal formation of 25S and 5.8S rRNAs.</text>
</comment>
<comment type="catalytic activity">
    <reaction>
        <text>ATP + H2O = ADP + phosphate + H(+)</text>
        <dbReference type="Rhea" id="RHEA:13065"/>
        <dbReference type="ChEBI" id="CHEBI:15377"/>
        <dbReference type="ChEBI" id="CHEBI:15378"/>
        <dbReference type="ChEBI" id="CHEBI:30616"/>
        <dbReference type="ChEBI" id="CHEBI:43474"/>
        <dbReference type="ChEBI" id="CHEBI:456216"/>
        <dbReference type="EC" id="3.6.4.13"/>
    </reaction>
</comment>
<comment type="subcellular location">
    <subcellularLocation>
        <location evidence="1">Nucleus</location>
        <location evidence="1">Nucleolus</location>
    </subcellularLocation>
</comment>
<comment type="domain">
    <text>The Q motif is unique to and characteristic of the DEAD box family of RNA helicases and controls ATP binding and hydrolysis.</text>
</comment>
<comment type="miscellaneous">
    <text>Present with 1460 molecules/cell in log phase SD medium.</text>
</comment>
<comment type="similarity">
    <text evidence="5">Belongs to the DEAD box helicase family. DDX31/DBP7 subfamily.</text>
</comment>
<gene>
    <name type="primary">dbp7</name>
    <name type="ORF">AO090026000744</name>
</gene>